<comment type="catalytic activity">
    <reaction evidence="1">
        <text>agmatine + H2O = N-carbamoylputrescine + NH4(+)</text>
        <dbReference type="Rhea" id="RHEA:18037"/>
        <dbReference type="ChEBI" id="CHEBI:15377"/>
        <dbReference type="ChEBI" id="CHEBI:28938"/>
        <dbReference type="ChEBI" id="CHEBI:58145"/>
        <dbReference type="ChEBI" id="CHEBI:58318"/>
        <dbReference type="EC" id="3.5.3.12"/>
    </reaction>
</comment>
<comment type="similarity">
    <text evidence="1">Belongs to the agmatine deiminase family.</text>
</comment>
<organism>
    <name type="scientific">Marinomonas sp. (strain MWYL1)</name>
    <dbReference type="NCBI Taxonomy" id="400668"/>
    <lineage>
        <taxon>Bacteria</taxon>
        <taxon>Pseudomonadati</taxon>
        <taxon>Pseudomonadota</taxon>
        <taxon>Gammaproteobacteria</taxon>
        <taxon>Oceanospirillales</taxon>
        <taxon>Oceanospirillaceae</taxon>
        <taxon>Marinomonas</taxon>
    </lineage>
</organism>
<accession>A6VVD9</accession>
<sequence>MSSTLYTSPRLDGFRMPAEHEPQEQVWMAWPTREDNWREKGKHAQAEFVAVATAIAQSTKVTFIVDAKHYEQARLALPDQIRVIEIPSDDCWMRDIGATYVVNDQGERRANSWQFNAWGGELDGLYDSWEQDNAVAEKMAAVTGDYVYHAPLILEGGSIHVDGEGTLYTTEECLLHPSRNPHLSKEDIEDLLKVYLNVEKIIWLKDGLYNDETNGHVDNIMHVIRPGVVALTDCEDSNDPQYAISKAAIKVLSQAIDAKGRTLEIIKLPMPGPLFVSEDEAKNLLKSDSMNRQVGERLAASYANFLITNNSIVFPTFGEKTDEQAKEILQKAFPEHKVIGVYARNILLGGGNIHCITQQVPEKCSIKVV</sequence>
<keyword id="KW-0378">Hydrolase</keyword>
<gene>
    <name evidence="1" type="primary">aguA</name>
    <name type="ordered locus">Mmwyl1_1489</name>
</gene>
<protein>
    <recommendedName>
        <fullName evidence="1">Putative agmatine deiminase</fullName>
        <ecNumber evidence="1">3.5.3.12</ecNumber>
    </recommendedName>
    <alternativeName>
        <fullName evidence="1">Agmatine iminohydrolase</fullName>
    </alternativeName>
</protein>
<dbReference type="EC" id="3.5.3.12" evidence="1"/>
<dbReference type="EMBL" id="CP000749">
    <property type="protein sequence ID" value="ABR70418.1"/>
    <property type="molecule type" value="Genomic_DNA"/>
</dbReference>
<dbReference type="SMR" id="A6VVD9"/>
<dbReference type="STRING" id="400668.Mmwyl1_1489"/>
<dbReference type="KEGG" id="mmw:Mmwyl1_1489"/>
<dbReference type="eggNOG" id="COG2957">
    <property type="taxonomic scope" value="Bacteria"/>
</dbReference>
<dbReference type="HOGENOM" id="CLU_037682_1_0_6"/>
<dbReference type="OrthoDB" id="9808013at2"/>
<dbReference type="GO" id="GO:0047632">
    <property type="term" value="F:agmatine deiminase activity"/>
    <property type="evidence" value="ECO:0007669"/>
    <property type="project" value="UniProtKB-UniRule"/>
</dbReference>
<dbReference type="GO" id="GO:0004668">
    <property type="term" value="F:protein-arginine deiminase activity"/>
    <property type="evidence" value="ECO:0007669"/>
    <property type="project" value="InterPro"/>
</dbReference>
<dbReference type="GO" id="GO:0009446">
    <property type="term" value="P:putrescine biosynthetic process"/>
    <property type="evidence" value="ECO:0007669"/>
    <property type="project" value="InterPro"/>
</dbReference>
<dbReference type="Gene3D" id="3.75.10.10">
    <property type="entry name" value="L-arginine/glycine Amidinotransferase, Chain A"/>
    <property type="match status" value="1"/>
</dbReference>
<dbReference type="HAMAP" id="MF_01841">
    <property type="entry name" value="Agmatine_deimin"/>
    <property type="match status" value="1"/>
</dbReference>
<dbReference type="InterPro" id="IPR017754">
    <property type="entry name" value="Agmatine_deiminase"/>
</dbReference>
<dbReference type="InterPro" id="IPR007466">
    <property type="entry name" value="Peptidyl-Arg-deiminase_porph"/>
</dbReference>
<dbReference type="NCBIfam" id="TIGR03380">
    <property type="entry name" value="agmatine_aguA"/>
    <property type="match status" value="1"/>
</dbReference>
<dbReference type="NCBIfam" id="NF010070">
    <property type="entry name" value="PRK13551.1"/>
    <property type="match status" value="1"/>
</dbReference>
<dbReference type="PANTHER" id="PTHR31377">
    <property type="entry name" value="AGMATINE DEIMINASE-RELATED"/>
    <property type="match status" value="1"/>
</dbReference>
<dbReference type="PANTHER" id="PTHR31377:SF0">
    <property type="entry name" value="AGMATINE DEIMINASE-RELATED"/>
    <property type="match status" value="1"/>
</dbReference>
<dbReference type="Pfam" id="PF04371">
    <property type="entry name" value="PAD_porph"/>
    <property type="match status" value="1"/>
</dbReference>
<dbReference type="SUPFAM" id="SSF55909">
    <property type="entry name" value="Pentein"/>
    <property type="match status" value="1"/>
</dbReference>
<evidence type="ECO:0000255" key="1">
    <source>
        <dbReference type="HAMAP-Rule" id="MF_01841"/>
    </source>
</evidence>
<reference key="1">
    <citation type="submission" date="2007-06" db="EMBL/GenBank/DDBJ databases">
        <title>Complete sequence of Marinomonas sp. MWYL1.</title>
        <authorList>
            <consortium name="US DOE Joint Genome Institute"/>
            <person name="Copeland A."/>
            <person name="Lucas S."/>
            <person name="Lapidus A."/>
            <person name="Barry K."/>
            <person name="Glavina del Rio T."/>
            <person name="Dalin E."/>
            <person name="Tice H."/>
            <person name="Pitluck S."/>
            <person name="Kiss H."/>
            <person name="Brettin T."/>
            <person name="Bruce D."/>
            <person name="Detter J.C."/>
            <person name="Han C."/>
            <person name="Schmutz J."/>
            <person name="Larimer F."/>
            <person name="Land M."/>
            <person name="Hauser L."/>
            <person name="Kyrpides N."/>
            <person name="Kim E."/>
            <person name="Johnston A.W.B."/>
            <person name="Todd J.D."/>
            <person name="Rogers R."/>
            <person name="Wexler M."/>
            <person name="Bond P.L."/>
            <person name="Li Y."/>
            <person name="Richardson P."/>
        </authorList>
    </citation>
    <scope>NUCLEOTIDE SEQUENCE [LARGE SCALE GENOMIC DNA]</scope>
    <source>
        <strain>MWYL1</strain>
    </source>
</reference>
<feature type="chain" id="PRO_1000088465" description="Putative agmatine deiminase">
    <location>
        <begin position="1"/>
        <end position="369"/>
    </location>
</feature>
<feature type="active site" description="Amidino-cysteine intermediate" evidence="1">
    <location>
        <position position="355"/>
    </location>
</feature>
<name>AGUA_MARMS</name>
<proteinExistence type="inferred from homology"/>